<comment type="function">
    <text>Cleaves proteins, imported into the mitochondrion, to their mature size.</text>
</comment>
<comment type="catalytic activity">
    <reaction>
        <text>Release of an N-terminal octapeptide as second stage of processing of some proteins imported into the mitochondrion.</text>
        <dbReference type="EC" id="3.4.24.59"/>
    </reaction>
</comment>
<comment type="cofactor">
    <cofactor evidence="1">
        <name>Zn(2+)</name>
        <dbReference type="ChEBI" id="CHEBI:29105"/>
    </cofactor>
    <text evidence="1">Binds 1 zinc ion.</text>
</comment>
<comment type="activity regulation">
    <text>Activity is divalent cation-dependent. It is stimulated by manganese, magnesium or calcium ions and reversibly inhibited by zinc, cobalt and iron.</text>
</comment>
<comment type="subunit">
    <text>Monomer.</text>
</comment>
<comment type="subcellular location">
    <subcellularLocation>
        <location>Mitochondrion matrix</location>
    </subcellularLocation>
</comment>
<comment type="similarity">
    <text evidence="5">Belongs to the peptidase M3 family.</text>
</comment>
<feature type="transit peptide" description="Mitochondrion" evidence="4">
    <location>
        <begin position="1"/>
        <end position="33"/>
    </location>
</feature>
<feature type="chain" id="PRO_0000028580" description="Mitochondrial intermediate peptidase">
    <location>
        <begin position="34"/>
        <end position="710"/>
    </location>
</feature>
<feature type="active site" evidence="3">
    <location>
        <position position="493"/>
    </location>
</feature>
<feature type="binding site" evidence="3">
    <location>
        <position position="492"/>
    </location>
    <ligand>
        <name>Zn(2+)</name>
        <dbReference type="ChEBI" id="CHEBI:29105"/>
        <note>catalytic</note>
    </ligand>
</feature>
<feature type="binding site" evidence="3">
    <location>
        <position position="496"/>
    </location>
    <ligand>
        <name>Zn(2+)</name>
        <dbReference type="ChEBI" id="CHEBI:29105"/>
        <note>catalytic</note>
    </ligand>
</feature>
<feature type="binding site" evidence="3">
    <location>
        <position position="499"/>
    </location>
    <ligand>
        <name>Zn(2+)</name>
        <dbReference type="ChEBI" id="CHEBI:29105"/>
        <note>catalytic</note>
    </ligand>
</feature>
<feature type="modified residue" description="N6-acetyllysine" evidence="2">
    <location>
        <position position="124"/>
    </location>
</feature>
<gene>
    <name type="primary">Mipep</name>
    <name type="synonym">Mip</name>
</gene>
<proteinExistence type="evidence at protein level"/>
<keyword id="KW-0007">Acetylation</keyword>
<keyword id="KW-0106">Calcium</keyword>
<keyword id="KW-0170">Cobalt</keyword>
<keyword id="KW-0903">Direct protein sequencing</keyword>
<keyword id="KW-0378">Hydrolase</keyword>
<keyword id="KW-0408">Iron</keyword>
<keyword id="KW-0460">Magnesium</keyword>
<keyword id="KW-0464">Manganese</keyword>
<keyword id="KW-0479">Metal-binding</keyword>
<keyword id="KW-0482">Metalloprotease</keyword>
<keyword id="KW-0496">Mitochondrion</keyword>
<keyword id="KW-0645">Protease</keyword>
<keyword id="KW-1185">Reference proteome</keyword>
<keyword id="KW-0809">Transit peptide</keyword>
<keyword id="KW-0862">Zinc</keyword>
<evidence type="ECO:0000250" key="1"/>
<evidence type="ECO:0000250" key="2">
    <source>
        <dbReference type="UniProtKB" id="Q99797"/>
    </source>
</evidence>
<evidence type="ECO:0000255" key="3">
    <source>
        <dbReference type="PROSITE-ProRule" id="PRU10095"/>
    </source>
</evidence>
<evidence type="ECO:0000269" key="4">
    <source>
    </source>
</evidence>
<evidence type="ECO:0000305" key="5"/>
<dbReference type="EC" id="3.4.24.59"/>
<dbReference type="EMBL" id="M96633">
    <property type="protein sequence ID" value="AAA41899.1"/>
    <property type="molecule type" value="mRNA"/>
</dbReference>
<dbReference type="PIR" id="A46273">
    <property type="entry name" value="A46273"/>
</dbReference>
<dbReference type="SMR" id="Q01992"/>
<dbReference type="FunCoup" id="Q01992">
    <property type="interactions" value="1997"/>
</dbReference>
<dbReference type="STRING" id="10116.ENSRNOP00000073167"/>
<dbReference type="iPTMnet" id="Q01992"/>
<dbReference type="PhosphoSitePlus" id="Q01992"/>
<dbReference type="jPOST" id="Q01992"/>
<dbReference type="PaxDb" id="10116-ENSRNOP00000018845"/>
<dbReference type="UCSC" id="RGD:621680">
    <property type="organism name" value="rat"/>
</dbReference>
<dbReference type="AGR" id="RGD:621680"/>
<dbReference type="RGD" id="621680">
    <property type="gene designation" value="Mipep"/>
</dbReference>
<dbReference type="eggNOG" id="KOG2090">
    <property type="taxonomic scope" value="Eukaryota"/>
</dbReference>
<dbReference type="InParanoid" id="Q01992"/>
<dbReference type="PRO" id="PR:Q01992"/>
<dbReference type="Proteomes" id="UP000002494">
    <property type="component" value="Unplaced"/>
</dbReference>
<dbReference type="GO" id="GO:0005759">
    <property type="term" value="C:mitochondrial matrix"/>
    <property type="evidence" value="ECO:0000314"/>
    <property type="project" value="RGD"/>
</dbReference>
<dbReference type="GO" id="GO:0005739">
    <property type="term" value="C:mitochondrion"/>
    <property type="evidence" value="ECO:0000318"/>
    <property type="project" value="GO_Central"/>
</dbReference>
<dbReference type="GO" id="GO:0004175">
    <property type="term" value="F:endopeptidase activity"/>
    <property type="evidence" value="ECO:0000314"/>
    <property type="project" value="RGD"/>
</dbReference>
<dbReference type="GO" id="GO:0046872">
    <property type="term" value="F:metal ion binding"/>
    <property type="evidence" value="ECO:0007669"/>
    <property type="project" value="UniProtKB-KW"/>
</dbReference>
<dbReference type="GO" id="GO:0004222">
    <property type="term" value="F:metalloendopeptidase activity"/>
    <property type="evidence" value="ECO:0000318"/>
    <property type="project" value="GO_Central"/>
</dbReference>
<dbReference type="GO" id="GO:0006518">
    <property type="term" value="P:peptide metabolic process"/>
    <property type="evidence" value="ECO:0000318"/>
    <property type="project" value="GO_Central"/>
</dbReference>
<dbReference type="GO" id="GO:0006627">
    <property type="term" value="P:protein processing involved in protein targeting to mitochondrion"/>
    <property type="evidence" value="ECO:0000318"/>
    <property type="project" value="GO_Central"/>
</dbReference>
<dbReference type="CDD" id="cd06457">
    <property type="entry name" value="M3A_MIP"/>
    <property type="match status" value="1"/>
</dbReference>
<dbReference type="FunFam" id="3.40.390.10:FF:000013">
    <property type="entry name" value="Mitochondrial intermediate peptidase"/>
    <property type="match status" value="1"/>
</dbReference>
<dbReference type="FunFam" id="1.10.1370.10:FF:000026">
    <property type="entry name" value="Si:ch73-1a9.4"/>
    <property type="match status" value="1"/>
</dbReference>
<dbReference type="Gene3D" id="3.40.390.10">
    <property type="entry name" value="Collagenase (Catalytic Domain)"/>
    <property type="match status" value="1"/>
</dbReference>
<dbReference type="Gene3D" id="1.10.1370.10">
    <property type="entry name" value="Neurolysin, domain 3"/>
    <property type="match status" value="1"/>
</dbReference>
<dbReference type="InterPro" id="IPR033851">
    <property type="entry name" value="M3A_MIP"/>
</dbReference>
<dbReference type="InterPro" id="IPR024079">
    <property type="entry name" value="MetalloPept_cat_dom_sf"/>
</dbReference>
<dbReference type="InterPro" id="IPR024077">
    <property type="entry name" value="Neurolysin/TOP_dom2"/>
</dbReference>
<dbReference type="InterPro" id="IPR045090">
    <property type="entry name" value="Pept_M3A_M3B"/>
</dbReference>
<dbReference type="InterPro" id="IPR001567">
    <property type="entry name" value="Pept_M3A_M3B_dom"/>
</dbReference>
<dbReference type="PANTHER" id="PTHR11804:SF79">
    <property type="entry name" value="MITOCHONDRIAL INTERMEDIATE PEPTIDASE"/>
    <property type="match status" value="1"/>
</dbReference>
<dbReference type="PANTHER" id="PTHR11804">
    <property type="entry name" value="PROTEASE M3 THIMET OLIGOPEPTIDASE-RELATED"/>
    <property type="match status" value="1"/>
</dbReference>
<dbReference type="Pfam" id="PF01432">
    <property type="entry name" value="Peptidase_M3"/>
    <property type="match status" value="1"/>
</dbReference>
<dbReference type="SUPFAM" id="SSF55486">
    <property type="entry name" value="Metalloproteases ('zincins'), catalytic domain"/>
    <property type="match status" value="1"/>
</dbReference>
<dbReference type="PROSITE" id="PS00142">
    <property type="entry name" value="ZINC_PROTEASE"/>
    <property type="match status" value="1"/>
</dbReference>
<reference key="1">
    <citation type="journal article" date="1992" name="Proc. Natl. Acad. Sci. U.S.A.">
        <title>Sequence analysis of rat mitochondrial intermediate peptidase: similarity to zinc metallopeptidases and to a putative yeast homologue.</title>
        <authorList>
            <person name="Isaya G."/>
            <person name="Kalousek F."/>
            <person name="Rosenberg L.E."/>
        </authorList>
    </citation>
    <scope>NUCLEOTIDE SEQUENCE [MRNA]</scope>
    <source>
        <tissue>Liver</tissue>
    </source>
</reference>
<reference key="2">
    <citation type="journal article" date="1992" name="EMBO J.">
        <title>Rat liver mitochondrial intermediate peptidase (MIP): purification and initial characterization.</title>
        <authorList>
            <person name="Kalousek F."/>
            <person name="Isaya G."/>
            <person name="Rosenberg L.E."/>
        </authorList>
    </citation>
    <scope>PROTEIN SEQUENCE OF 34-50 AND 528-542</scope>
    <source>
        <tissue>Liver</tissue>
    </source>
</reference>
<sequence>MLLAAGTRYAYRLCGRRAAAALQGRAGRSCARSVSTSWSPVGAAFNVKPQGHLWDLLGERRGLFGVPELSTPEGFQVAQEEALRKTEWLVERACSTPPGPQTVLIFDELSDCLCRVADLADFVKIGHPEQAFREAAQEACRSIGTMVEKLNTNVELYQSLQKLLDDKKLMDSLDAETRRVAELFMFDFEISGIHLDEEKRRRAVDLNVKILDLSSAFLMGTNFPIKIQKHLLPEHIQHHFARDGRHLVIDGLHAEASDDLVREAAYKIFLYPNADQLKCLEELLSSRDLLANLVGYLPFPTGPPGTIAQTPETVMQFLEKLSEKLCERTRKDFEMMQGMKTKLNPQNSELMPWDPPYYSGVIRAERYNIEPSLYCPFLSLGACMEGLNVLFNRLLGVTLYAEQPFKGEVWCIDVRKLAVVHESEGLLGYIYCDFFQRANKPQQDCHFTIRGGRLKEDGSYQLPVVVLMLNLPHASRDFPTLLTPGMMENLFHEMGHAMHSMLGRTRYQHVTGTRCPTDFAEVPSILMEYFSNDYRVVSQFAKHYQTGQPLPKAMVSRLCESKKVCAAAEMQLQVFYAALDQIYHGQHPLKKSTTDILMETQEQFYGLPYVPDTAWQLRFSHLVGYGAKYYSYLMSRAVASMVWKECFLQDPFNRAAGERYRREMLAHGGGKEPMLMIQGMLQKCPSIDDFVDALVSDLNLDFETFFMDSK</sequence>
<organism>
    <name type="scientific">Rattus norvegicus</name>
    <name type="common">Rat</name>
    <dbReference type="NCBI Taxonomy" id="10116"/>
    <lineage>
        <taxon>Eukaryota</taxon>
        <taxon>Metazoa</taxon>
        <taxon>Chordata</taxon>
        <taxon>Craniata</taxon>
        <taxon>Vertebrata</taxon>
        <taxon>Euteleostomi</taxon>
        <taxon>Mammalia</taxon>
        <taxon>Eutheria</taxon>
        <taxon>Euarchontoglires</taxon>
        <taxon>Glires</taxon>
        <taxon>Rodentia</taxon>
        <taxon>Myomorpha</taxon>
        <taxon>Muroidea</taxon>
        <taxon>Muridae</taxon>
        <taxon>Murinae</taxon>
        <taxon>Rattus</taxon>
    </lineage>
</organism>
<protein>
    <recommendedName>
        <fullName>Mitochondrial intermediate peptidase</fullName>
        <shortName>MIP</shortName>
        <ecNumber>3.4.24.59</ecNumber>
    </recommendedName>
</protein>
<name>MIPEP_RAT</name>
<accession>Q01992</accession>